<comment type="function">
    <text evidence="1">Destroys superoxide anion radicals which are normally produced within the cells and which are toxic to biological systems. Catalyzes the dismutation of superoxide anion radicals into O2 and H2O2 by successive reduction and oxidation of the transition metal ion at the active site.</text>
</comment>
<comment type="catalytic activity">
    <reaction evidence="1">
        <text>2 superoxide + 2 H(+) = H2O2 + O2</text>
        <dbReference type="Rhea" id="RHEA:20696"/>
        <dbReference type="ChEBI" id="CHEBI:15378"/>
        <dbReference type="ChEBI" id="CHEBI:15379"/>
        <dbReference type="ChEBI" id="CHEBI:16240"/>
        <dbReference type="ChEBI" id="CHEBI:18421"/>
        <dbReference type="EC" id="1.15.1.1"/>
    </reaction>
    <physiologicalReaction direction="left-to-right" evidence="1">
        <dbReference type="Rhea" id="RHEA:20697"/>
    </physiologicalReaction>
</comment>
<comment type="cofactor">
    <cofactor evidence="1">
        <name>Mn(2+)</name>
        <dbReference type="ChEBI" id="CHEBI:29035"/>
    </cofactor>
    <cofactor evidence="1">
        <name>Fe(3+)</name>
        <dbReference type="ChEBI" id="CHEBI:29034"/>
    </cofactor>
    <text evidence="1">Binds 1 Mn(2+) or Fe(3+) ion per subunit.</text>
</comment>
<comment type="similarity">
    <text evidence="2">Belongs to the iron/manganese superoxide dismutase family.</text>
</comment>
<sequence>YIDKETMILHHDKHHATYLANANAALEKHPEIGEDLEFLLSDVTRIPEDIRQALINNGGGHLNHALFWELLTPEKQEPTAEVLAAIEDAFGSFEDFKTAFTQAATTRFGSGWAWLVVNQEGKLEVMSTGNQDNPISQGKQPILGL</sequence>
<accession>O33605</accession>
<gene>
    <name type="primary">sodA</name>
</gene>
<evidence type="ECO:0000250" key="1">
    <source>
        <dbReference type="UniProtKB" id="P80293"/>
    </source>
</evidence>
<evidence type="ECO:0000305" key="2"/>
<organism>
    <name type="scientific">Streptococcus alactolyticus</name>
    <dbReference type="NCBI Taxonomy" id="29389"/>
    <lineage>
        <taxon>Bacteria</taxon>
        <taxon>Bacillati</taxon>
        <taxon>Bacillota</taxon>
        <taxon>Bacilli</taxon>
        <taxon>Lactobacillales</taxon>
        <taxon>Streptococcaceae</taxon>
        <taxon>Streptococcus</taxon>
    </lineage>
</organism>
<dbReference type="EC" id="1.15.1.1" evidence="1"/>
<dbReference type="EMBL" id="Z95894">
    <property type="protein sequence ID" value="CAB09347.1"/>
    <property type="molecule type" value="Genomic_DNA"/>
</dbReference>
<dbReference type="SMR" id="O33605"/>
<dbReference type="GO" id="GO:0005737">
    <property type="term" value="C:cytoplasm"/>
    <property type="evidence" value="ECO:0007669"/>
    <property type="project" value="TreeGrafter"/>
</dbReference>
<dbReference type="GO" id="GO:0046872">
    <property type="term" value="F:metal ion binding"/>
    <property type="evidence" value="ECO:0007669"/>
    <property type="project" value="UniProtKB-KW"/>
</dbReference>
<dbReference type="GO" id="GO:0004784">
    <property type="term" value="F:superoxide dismutase activity"/>
    <property type="evidence" value="ECO:0007669"/>
    <property type="project" value="UniProtKB-EC"/>
</dbReference>
<dbReference type="FunFam" id="1.10.287.990:FF:000001">
    <property type="entry name" value="Superoxide dismutase"/>
    <property type="match status" value="1"/>
</dbReference>
<dbReference type="Gene3D" id="1.10.287.990">
    <property type="entry name" value="Fe,Mn superoxide dismutase (SOD) domain"/>
    <property type="match status" value="1"/>
</dbReference>
<dbReference type="Gene3D" id="3.55.40.20">
    <property type="entry name" value="Iron/manganese superoxide dismutase, C-terminal domain"/>
    <property type="match status" value="1"/>
</dbReference>
<dbReference type="InterPro" id="IPR001189">
    <property type="entry name" value="Mn/Fe_SOD"/>
</dbReference>
<dbReference type="InterPro" id="IPR019832">
    <property type="entry name" value="Mn/Fe_SOD_C"/>
</dbReference>
<dbReference type="InterPro" id="IPR019831">
    <property type="entry name" value="Mn/Fe_SOD_N"/>
</dbReference>
<dbReference type="InterPro" id="IPR036324">
    <property type="entry name" value="Mn/Fe_SOD_N_sf"/>
</dbReference>
<dbReference type="InterPro" id="IPR036314">
    <property type="entry name" value="SOD_C_sf"/>
</dbReference>
<dbReference type="PANTHER" id="PTHR43595">
    <property type="entry name" value="37S RIBOSOMAL PROTEIN S26, MITOCHONDRIAL"/>
    <property type="match status" value="1"/>
</dbReference>
<dbReference type="PANTHER" id="PTHR43595:SF2">
    <property type="entry name" value="SMALL RIBOSOMAL SUBUNIT PROTEIN MS42"/>
    <property type="match status" value="1"/>
</dbReference>
<dbReference type="Pfam" id="PF02777">
    <property type="entry name" value="Sod_Fe_C"/>
    <property type="match status" value="1"/>
</dbReference>
<dbReference type="Pfam" id="PF00081">
    <property type="entry name" value="Sod_Fe_N"/>
    <property type="match status" value="1"/>
</dbReference>
<dbReference type="PRINTS" id="PR01703">
    <property type="entry name" value="MNSODISMTASE"/>
</dbReference>
<dbReference type="SUPFAM" id="SSF54719">
    <property type="entry name" value="Fe,Mn superoxide dismutase (SOD), C-terminal domain"/>
    <property type="match status" value="1"/>
</dbReference>
<dbReference type="SUPFAM" id="SSF46609">
    <property type="entry name" value="Fe,Mn superoxide dismutase (SOD), N-terminal domain"/>
    <property type="match status" value="1"/>
</dbReference>
<proteinExistence type="inferred from homology"/>
<name>SODM_STRAY</name>
<reference key="1">
    <citation type="journal article" date="1998" name="J. Clin. Microbiol.">
        <title>Identification of streptococci to species level by sequencing the gene encoding the manganese-dependent superoxide dismutase.</title>
        <authorList>
            <person name="Poyart C."/>
            <person name="Quesne G."/>
            <person name="Coulon S."/>
            <person name="Berche P."/>
            <person name="Trieu-Cuot P."/>
        </authorList>
    </citation>
    <scope>NUCLEOTIDE SEQUENCE [GENOMIC DNA]</scope>
    <source>
        <strain>ATCC 43077 / DSM 20728 / CCUG 27297 / CIP 103244 / DSM 20728 / JCM 31116 / LMG 14808 / NCIMB 701091 / GP2</strain>
    </source>
</reference>
<keyword id="KW-0408">Iron</keyword>
<keyword id="KW-0464">Manganese</keyword>
<keyword id="KW-0479">Metal-binding</keyword>
<keyword id="KW-0560">Oxidoreductase</keyword>
<feature type="chain" id="PRO_0000160089" description="Superoxide dismutase [Mn/Fe]">
    <location>
        <begin position="1" status="less than"/>
        <end position="145" status="greater than"/>
    </location>
</feature>
<feature type="binding site" evidence="1">
    <location>
        <position position="10"/>
    </location>
    <ligand>
        <name>Fe(3+)</name>
        <dbReference type="ChEBI" id="CHEBI:29034"/>
    </ligand>
</feature>
<feature type="binding site" evidence="1">
    <location>
        <position position="10"/>
    </location>
    <ligand>
        <name>Mn(2+)</name>
        <dbReference type="ChEBI" id="CHEBI:29035"/>
    </ligand>
</feature>
<feature type="binding site" evidence="1">
    <location>
        <position position="64"/>
    </location>
    <ligand>
        <name>Fe(3+)</name>
        <dbReference type="ChEBI" id="CHEBI:29034"/>
    </ligand>
</feature>
<feature type="binding site" evidence="1">
    <location>
        <position position="64"/>
    </location>
    <ligand>
        <name>Mn(2+)</name>
        <dbReference type="ChEBI" id="CHEBI:29035"/>
    </ligand>
</feature>
<feature type="non-terminal residue">
    <location>
        <position position="1"/>
    </location>
</feature>
<feature type="non-terminal residue">
    <location>
        <position position="145"/>
    </location>
</feature>
<protein>
    <recommendedName>
        <fullName>Superoxide dismutase [Mn/Fe]</fullName>
        <ecNumber evidence="1">1.15.1.1</ecNumber>
    </recommendedName>
</protein>